<comment type="function">
    <text evidence="1">May function as a substrate receptor for CUL4-DDB1 E3 ubiquitin-protein ligase complex.</text>
</comment>
<comment type="pathway">
    <text>Protein modification; protein ubiquitination.</text>
</comment>
<comment type="subunit">
    <text evidence="1">Interacts with DDB1, CUL4A and CUL4B.</text>
</comment>
<comment type="subcellular location">
    <subcellularLocation>
        <location evidence="3">Membrane</location>
        <topology evidence="3">Multi-pass membrane protein</topology>
    </subcellularLocation>
    <subcellularLocation>
        <location evidence="1">Nucleus</location>
        <location evidence="1">Nucleolus</location>
    </subcellularLocation>
    <text>Has been shown in human and mouse to be a nucleolar protein, while sequence analysis programs clearly predict 2 transmembrane regions.</text>
</comment>
<accession>B1H299</accession>
<keyword id="KW-0472">Membrane</keyword>
<keyword id="KW-0539">Nucleus</keyword>
<keyword id="KW-1185">Reference proteome</keyword>
<keyword id="KW-0812">Transmembrane</keyword>
<keyword id="KW-1133">Transmembrane helix</keyword>
<keyword id="KW-0833">Ubl conjugation pathway</keyword>
<reference key="1">
    <citation type="journal article" date="2004" name="Genome Res.">
        <title>The status, quality, and expansion of the NIH full-length cDNA project: the Mammalian Gene Collection (MGC).</title>
        <authorList>
            <consortium name="The MGC Project Team"/>
        </authorList>
    </citation>
    <scope>NUCLEOTIDE SEQUENCE [LARGE SCALE MRNA]</scope>
    <source>
        <tissue>Placenta</tissue>
    </source>
</reference>
<evidence type="ECO:0000250" key="1"/>
<evidence type="ECO:0000255" key="2"/>
<evidence type="ECO:0000305" key="3"/>
<sequence length="505" mass="56450">MGRTRKANVCPRLSRRALGFYTRDAGVVQRTNLGILRALVCQESTKFKNVWTTHSKSPIAYERGRIYFDNYRCCVSSVASEPRKLYEMPKCSKSEKIEDALLWECPVGEILPDPSDYKSSLIALTAHNWLLRISATTGEILEKIYLASYCKFRYLSWDTPQEVIAVKSAQNKGSAAARQAGTQPPVLLYLAVFRVLPFSLVGILEINRKVFENVTDATLSHGILIVMYSSGLVRLYSFQAIIEQFMQQKLDLGCACSQGGTTGTVGEAPFGIPCNVKITDSPPPLFEVSSLENAFQIGGHPWHYIITPNKKKQKGVFHICALKDNSLAKNGIQEMECCSLESDWIYFHPDASGRIIHVGPNQVKVLKLSEVENNSSQHQISEDFVIWANREDRKENLITVTASGRVVKRNVNLLDDDPEQETFKVVDYEDELNLLSVVAVTQIDAEGKAHLDFHCNEYGTLLKSIPLVESWDVVCITTGTLSCKGFLYKRHLLGHVLVSPDSPVP</sequence>
<dbReference type="EMBL" id="BC160919">
    <property type="protein sequence ID" value="AAI60919.1"/>
    <property type="molecule type" value="mRNA"/>
</dbReference>
<dbReference type="RefSeq" id="NP_001171159.1">
    <property type="nucleotide sequence ID" value="NM_001177688.2"/>
</dbReference>
<dbReference type="FunCoup" id="B1H299">
    <property type="interactions" value="2723"/>
</dbReference>
<dbReference type="STRING" id="10116.ENSRNOP00000031374"/>
<dbReference type="PhosphoSitePlus" id="B1H299"/>
<dbReference type="PaxDb" id="10116-ENSRNOP00000031374"/>
<dbReference type="GeneID" id="499807"/>
<dbReference type="KEGG" id="rno:499807"/>
<dbReference type="UCSC" id="RGD:1565551">
    <property type="organism name" value="rat"/>
</dbReference>
<dbReference type="AGR" id="RGD:1565551"/>
<dbReference type="CTD" id="80067"/>
<dbReference type="RGD" id="1565551">
    <property type="gene designation" value="Dcaf17"/>
</dbReference>
<dbReference type="eggNOG" id="ENOG502QQ41">
    <property type="taxonomic scope" value="Eukaryota"/>
</dbReference>
<dbReference type="HOGENOM" id="CLU_604033_0_0_1"/>
<dbReference type="InParanoid" id="B1H299"/>
<dbReference type="PhylomeDB" id="B1H299"/>
<dbReference type="Reactome" id="R-RNO-8951664">
    <property type="pathway name" value="Neddylation"/>
</dbReference>
<dbReference type="UniPathway" id="UPA00143"/>
<dbReference type="PRO" id="PR:B1H299"/>
<dbReference type="Proteomes" id="UP000002494">
    <property type="component" value="Unplaced"/>
</dbReference>
<dbReference type="GO" id="GO:0080008">
    <property type="term" value="C:Cul4-RING E3 ubiquitin ligase complex"/>
    <property type="evidence" value="ECO:0000250"/>
    <property type="project" value="UniProtKB"/>
</dbReference>
<dbReference type="GO" id="GO:0016020">
    <property type="term" value="C:membrane"/>
    <property type="evidence" value="ECO:0007669"/>
    <property type="project" value="UniProtKB-SubCell"/>
</dbReference>
<dbReference type="GO" id="GO:0005730">
    <property type="term" value="C:nucleolus"/>
    <property type="evidence" value="ECO:0007669"/>
    <property type="project" value="UniProtKB-SubCell"/>
</dbReference>
<dbReference type="GO" id="GO:0001675">
    <property type="term" value="P:acrosome assembly"/>
    <property type="evidence" value="ECO:0000266"/>
    <property type="project" value="RGD"/>
</dbReference>
<dbReference type="GO" id="GO:0000902">
    <property type="term" value="P:cell morphogenesis"/>
    <property type="evidence" value="ECO:0000266"/>
    <property type="project" value="RGD"/>
</dbReference>
<dbReference type="GO" id="GO:0016567">
    <property type="term" value="P:protein ubiquitination"/>
    <property type="evidence" value="ECO:0007669"/>
    <property type="project" value="UniProtKB-UniPathway"/>
</dbReference>
<dbReference type="GO" id="GO:0007283">
    <property type="term" value="P:spermatogenesis"/>
    <property type="evidence" value="ECO:0000266"/>
    <property type="project" value="RGD"/>
</dbReference>
<dbReference type="InterPro" id="IPR031620">
    <property type="entry name" value="DCAF17"/>
</dbReference>
<dbReference type="PANTHER" id="PTHR14815">
    <property type="entry name" value="DDB1- AND CUL4-ASSOCIATED FACTOR 17"/>
    <property type="match status" value="1"/>
</dbReference>
<dbReference type="PANTHER" id="PTHR14815:SF2">
    <property type="entry name" value="DDB1- AND CUL4-ASSOCIATED FACTOR 17"/>
    <property type="match status" value="1"/>
</dbReference>
<dbReference type="Pfam" id="PF15802">
    <property type="entry name" value="DCAF17"/>
    <property type="match status" value="1"/>
</dbReference>
<proteinExistence type="evidence at transcript level"/>
<protein>
    <recommendedName>
        <fullName>DDB1- and CUL4-associated factor 17</fullName>
    </recommendedName>
</protein>
<feature type="chain" id="PRO_0000363890" description="DDB1- and CUL4-associated factor 17">
    <location>
        <begin position="1"/>
        <end position="505"/>
    </location>
</feature>
<feature type="transmembrane region" description="Helical" evidence="2">
    <location>
        <begin position="186"/>
        <end position="206"/>
    </location>
</feature>
<feature type="transmembrane region" description="Helical" evidence="2">
    <location>
        <begin position="222"/>
        <end position="242"/>
    </location>
</feature>
<organism>
    <name type="scientific">Rattus norvegicus</name>
    <name type="common">Rat</name>
    <dbReference type="NCBI Taxonomy" id="10116"/>
    <lineage>
        <taxon>Eukaryota</taxon>
        <taxon>Metazoa</taxon>
        <taxon>Chordata</taxon>
        <taxon>Craniata</taxon>
        <taxon>Vertebrata</taxon>
        <taxon>Euteleostomi</taxon>
        <taxon>Mammalia</taxon>
        <taxon>Eutheria</taxon>
        <taxon>Euarchontoglires</taxon>
        <taxon>Glires</taxon>
        <taxon>Rodentia</taxon>
        <taxon>Myomorpha</taxon>
        <taxon>Muroidea</taxon>
        <taxon>Muridae</taxon>
        <taxon>Murinae</taxon>
        <taxon>Rattus</taxon>
    </lineage>
</organism>
<name>DCA17_RAT</name>
<gene>
    <name type="primary">Dcaf17</name>
</gene>